<name>YNV5_SCHPO</name>
<comment type="subcellular location">
    <subcellularLocation>
        <location evidence="2">Mitochondrion membrane</location>
        <topology evidence="2">Multi-pass membrane protein</topology>
    </subcellularLocation>
</comment>
<sequence>MYPFSFDPSSKLPVTGIYNILLFNLFPLATYLVETFCFFRRWKIACTLLCSITVILAYRMCAVYHHVGYKDVSTFGLAYGFLIMMSLRTCFLSWRDMVPSRNDPVQISAVKRRRPFIRNARWNFVDYALSLRKYGWTDDVVPPYCRKVLTYKSLGIRTAVYVGAFCFVNCFKTRLSNWMLLPISANPWYIQVAFCVTSGFFSYLFINALYYLFAIIFVPLGIWDIAEYPLMMGNVSKTTSVNDFWSRDWHVCTKPYFRVIAWDPTIALTGSKFLASCSCFFLSALFHDFAYWSISGRCSPAFFFQLLIQPFLINLEKRIPLLRKYHYWVLIIEMLINGTYGMGVVLLKFKWKTCSQI</sequence>
<organism>
    <name type="scientific">Schizosaccharomyces pombe (strain 972 / ATCC 24843)</name>
    <name type="common">Fission yeast</name>
    <dbReference type="NCBI Taxonomy" id="284812"/>
    <lineage>
        <taxon>Eukaryota</taxon>
        <taxon>Fungi</taxon>
        <taxon>Dikarya</taxon>
        <taxon>Ascomycota</taxon>
        <taxon>Taphrinomycotina</taxon>
        <taxon>Schizosaccharomycetes</taxon>
        <taxon>Schizosaccharomycetales</taxon>
        <taxon>Schizosaccharomycetaceae</taxon>
        <taxon>Schizosaccharomyces</taxon>
    </lineage>
</organism>
<evidence type="ECO:0000255" key="1"/>
<evidence type="ECO:0000305" key="2"/>
<gene>
    <name type="ORF">SPBC3H7.05c</name>
</gene>
<protein>
    <recommendedName>
        <fullName>Uncharacterized membrane protein C3H7.05c</fullName>
    </recommendedName>
</protein>
<accession>O74380</accession>
<proteinExistence type="predicted"/>
<feature type="chain" id="PRO_0000304076" description="Uncharacterized membrane protein C3H7.05c">
    <location>
        <begin position="1"/>
        <end position="357"/>
    </location>
</feature>
<feature type="transmembrane region" description="Helical" evidence="1">
    <location>
        <begin position="13"/>
        <end position="33"/>
    </location>
</feature>
<feature type="transmembrane region" description="Helical" evidence="1">
    <location>
        <begin position="44"/>
        <end position="64"/>
    </location>
</feature>
<feature type="transmembrane region" description="Helical" evidence="1">
    <location>
        <begin position="72"/>
        <end position="92"/>
    </location>
</feature>
<feature type="transmembrane region" description="Helical" evidence="1">
    <location>
        <begin position="148"/>
        <end position="168"/>
    </location>
</feature>
<feature type="transmembrane region" description="Helical" evidence="1">
    <location>
        <begin position="181"/>
        <end position="201"/>
    </location>
</feature>
<feature type="transmembrane region" description="Helical" evidence="1">
    <location>
        <begin position="203"/>
        <end position="223"/>
    </location>
</feature>
<feature type="transmembrane region" description="Helical" evidence="1">
    <location>
        <begin position="266"/>
        <end position="286"/>
    </location>
</feature>
<feature type="transmembrane region" description="Helical" evidence="1">
    <location>
        <begin position="293"/>
        <end position="313"/>
    </location>
</feature>
<feature type="transmembrane region" description="Helical" evidence="1">
    <location>
        <begin position="327"/>
        <end position="347"/>
    </location>
</feature>
<keyword id="KW-0472">Membrane</keyword>
<keyword id="KW-0496">Mitochondrion</keyword>
<keyword id="KW-1185">Reference proteome</keyword>
<keyword id="KW-0812">Transmembrane</keyword>
<keyword id="KW-1133">Transmembrane helix</keyword>
<reference key="1">
    <citation type="journal article" date="2002" name="Nature">
        <title>The genome sequence of Schizosaccharomyces pombe.</title>
        <authorList>
            <person name="Wood V."/>
            <person name="Gwilliam R."/>
            <person name="Rajandream M.A."/>
            <person name="Lyne M.H."/>
            <person name="Lyne R."/>
            <person name="Stewart A."/>
            <person name="Sgouros J.G."/>
            <person name="Peat N."/>
            <person name="Hayles J."/>
            <person name="Baker S.G."/>
            <person name="Basham D."/>
            <person name="Bowman S."/>
            <person name="Brooks K."/>
            <person name="Brown D."/>
            <person name="Brown S."/>
            <person name="Chillingworth T."/>
            <person name="Churcher C.M."/>
            <person name="Collins M."/>
            <person name="Connor R."/>
            <person name="Cronin A."/>
            <person name="Davis P."/>
            <person name="Feltwell T."/>
            <person name="Fraser A."/>
            <person name="Gentles S."/>
            <person name="Goble A."/>
            <person name="Hamlin N."/>
            <person name="Harris D.E."/>
            <person name="Hidalgo J."/>
            <person name="Hodgson G."/>
            <person name="Holroyd S."/>
            <person name="Hornsby T."/>
            <person name="Howarth S."/>
            <person name="Huckle E.J."/>
            <person name="Hunt S."/>
            <person name="Jagels K."/>
            <person name="James K.D."/>
            <person name="Jones L."/>
            <person name="Jones M."/>
            <person name="Leather S."/>
            <person name="McDonald S."/>
            <person name="McLean J."/>
            <person name="Mooney P."/>
            <person name="Moule S."/>
            <person name="Mungall K.L."/>
            <person name="Murphy L.D."/>
            <person name="Niblett D."/>
            <person name="Odell C."/>
            <person name="Oliver K."/>
            <person name="O'Neil S."/>
            <person name="Pearson D."/>
            <person name="Quail M.A."/>
            <person name="Rabbinowitsch E."/>
            <person name="Rutherford K.M."/>
            <person name="Rutter S."/>
            <person name="Saunders D."/>
            <person name="Seeger K."/>
            <person name="Sharp S."/>
            <person name="Skelton J."/>
            <person name="Simmonds M.N."/>
            <person name="Squares R."/>
            <person name="Squares S."/>
            <person name="Stevens K."/>
            <person name="Taylor K."/>
            <person name="Taylor R.G."/>
            <person name="Tivey A."/>
            <person name="Walsh S.V."/>
            <person name="Warren T."/>
            <person name="Whitehead S."/>
            <person name="Woodward J.R."/>
            <person name="Volckaert G."/>
            <person name="Aert R."/>
            <person name="Robben J."/>
            <person name="Grymonprez B."/>
            <person name="Weltjens I."/>
            <person name="Vanstreels E."/>
            <person name="Rieger M."/>
            <person name="Schaefer M."/>
            <person name="Mueller-Auer S."/>
            <person name="Gabel C."/>
            <person name="Fuchs M."/>
            <person name="Duesterhoeft A."/>
            <person name="Fritzc C."/>
            <person name="Holzer E."/>
            <person name="Moestl D."/>
            <person name="Hilbert H."/>
            <person name="Borzym K."/>
            <person name="Langer I."/>
            <person name="Beck A."/>
            <person name="Lehrach H."/>
            <person name="Reinhardt R."/>
            <person name="Pohl T.M."/>
            <person name="Eger P."/>
            <person name="Zimmermann W."/>
            <person name="Wedler H."/>
            <person name="Wambutt R."/>
            <person name="Purnelle B."/>
            <person name="Goffeau A."/>
            <person name="Cadieu E."/>
            <person name="Dreano S."/>
            <person name="Gloux S."/>
            <person name="Lelaure V."/>
            <person name="Mottier S."/>
            <person name="Galibert F."/>
            <person name="Aves S.J."/>
            <person name="Xiang Z."/>
            <person name="Hunt C."/>
            <person name="Moore K."/>
            <person name="Hurst S.M."/>
            <person name="Lucas M."/>
            <person name="Rochet M."/>
            <person name="Gaillardin C."/>
            <person name="Tallada V.A."/>
            <person name="Garzon A."/>
            <person name="Thode G."/>
            <person name="Daga R.R."/>
            <person name="Cruzado L."/>
            <person name="Jimenez J."/>
            <person name="Sanchez M."/>
            <person name="del Rey F."/>
            <person name="Benito J."/>
            <person name="Dominguez A."/>
            <person name="Revuelta J.L."/>
            <person name="Moreno S."/>
            <person name="Armstrong J."/>
            <person name="Forsburg S.L."/>
            <person name="Cerutti L."/>
            <person name="Lowe T."/>
            <person name="McCombie W.R."/>
            <person name="Paulsen I."/>
            <person name="Potashkin J."/>
            <person name="Shpakovski G.V."/>
            <person name="Ussery D."/>
            <person name="Barrell B.G."/>
            <person name="Nurse P."/>
        </authorList>
    </citation>
    <scope>NUCLEOTIDE SEQUENCE [LARGE SCALE GENOMIC DNA]</scope>
    <source>
        <strain>972 / ATCC 24843</strain>
    </source>
</reference>
<reference key="2">
    <citation type="journal article" date="2006" name="Nat. Biotechnol.">
        <title>ORFeome cloning and global analysis of protein localization in the fission yeast Schizosaccharomyces pombe.</title>
        <authorList>
            <person name="Matsuyama A."/>
            <person name="Arai R."/>
            <person name="Yashiroda Y."/>
            <person name="Shirai A."/>
            <person name="Kamata A."/>
            <person name="Sekido S."/>
            <person name="Kobayashi Y."/>
            <person name="Hashimoto A."/>
            <person name="Hamamoto M."/>
            <person name="Hiraoka Y."/>
            <person name="Horinouchi S."/>
            <person name="Yoshida M."/>
        </authorList>
    </citation>
    <scope>SUBCELLULAR LOCATION [LARGE SCALE ANALYSIS]</scope>
</reference>
<dbReference type="EMBL" id="CU329671">
    <property type="protein sequence ID" value="CAA20301.1"/>
    <property type="molecule type" value="Genomic_DNA"/>
</dbReference>
<dbReference type="PIR" id="T40410">
    <property type="entry name" value="T40410"/>
</dbReference>
<dbReference type="RefSeq" id="NP_595770.1">
    <property type="nucleotide sequence ID" value="NM_001021671.2"/>
</dbReference>
<dbReference type="BioGRID" id="277551">
    <property type="interactions" value="14"/>
</dbReference>
<dbReference type="STRING" id="284812.O74380"/>
<dbReference type="iPTMnet" id="O74380"/>
<dbReference type="PaxDb" id="4896-SPBC3H7.05c.1"/>
<dbReference type="EnsemblFungi" id="SPBC3H7.05c.1">
    <property type="protein sequence ID" value="SPBC3H7.05c.1:pep"/>
    <property type="gene ID" value="SPBC3H7.05c"/>
</dbReference>
<dbReference type="KEGG" id="spo:2541036"/>
<dbReference type="PomBase" id="SPBC3H7.05c"/>
<dbReference type="VEuPathDB" id="FungiDB:SPBC3H7.05c"/>
<dbReference type="HOGENOM" id="CLU_776493_0_0_1"/>
<dbReference type="InParanoid" id="O74380"/>
<dbReference type="OMA" id="LYHDFAF"/>
<dbReference type="PRO" id="PR:O74380"/>
<dbReference type="Proteomes" id="UP000002485">
    <property type="component" value="Chromosome II"/>
</dbReference>
<dbReference type="GO" id="GO:0031966">
    <property type="term" value="C:mitochondrial membrane"/>
    <property type="evidence" value="ECO:0007669"/>
    <property type="project" value="UniProtKB-SubCell"/>
</dbReference>
<dbReference type="GO" id="GO:0005739">
    <property type="term" value="C:mitochondrion"/>
    <property type="evidence" value="ECO:0007005"/>
    <property type="project" value="PomBase"/>
</dbReference>
<dbReference type="GO" id="GO:0008374">
    <property type="term" value="F:O-acyltransferase activity"/>
    <property type="evidence" value="ECO:0000250"/>
    <property type="project" value="PomBase"/>
</dbReference>
<dbReference type="GO" id="GO:0006629">
    <property type="term" value="P:lipid metabolic process"/>
    <property type="evidence" value="ECO:0000250"/>
    <property type="project" value="PomBase"/>
</dbReference>
<dbReference type="InterPro" id="IPR032805">
    <property type="entry name" value="Wax_synthase_dom"/>
</dbReference>
<dbReference type="Pfam" id="PF13813">
    <property type="entry name" value="MBOAT_2"/>
    <property type="match status" value="1"/>
</dbReference>